<name>LSPA_DEHMB</name>
<evidence type="ECO:0000255" key="1">
    <source>
        <dbReference type="HAMAP-Rule" id="MF_00161"/>
    </source>
</evidence>
<protein>
    <recommendedName>
        <fullName evidence="1">Lipoprotein signal peptidase</fullName>
        <ecNumber evidence="1">3.4.23.36</ecNumber>
    </recommendedName>
    <alternativeName>
        <fullName evidence="1">Prolipoprotein signal peptidase</fullName>
    </alternativeName>
    <alternativeName>
        <fullName evidence="1">Signal peptidase II</fullName>
        <shortName evidence="1">SPase II</shortName>
    </alternativeName>
</protein>
<accession>A5FPV7</accession>
<proteinExistence type="inferred from homology"/>
<reference key="1">
    <citation type="submission" date="2007-05" db="EMBL/GenBank/DDBJ databases">
        <title>Complete sequence of Dehalococcoides sp. BAV1.</title>
        <authorList>
            <consortium name="US DOE Joint Genome Institute"/>
            <person name="Copeland A."/>
            <person name="Lucas S."/>
            <person name="Lapidus A."/>
            <person name="Barry K."/>
            <person name="Detter J.C."/>
            <person name="Glavina del Rio T."/>
            <person name="Hammon N."/>
            <person name="Israni S."/>
            <person name="Pitluck S."/>
            <person name="Lowry S."/>
            <person name="Clum A."/>
            <person name="Schmutz J."/>
            <person name="Larimer F."/>
            <person name="Land M."/>
            <person name="Hauser L."/>
            <person name="Kyrpides N."/>
            <person name="Kim E."/>
            <person name="Ritalahti K.M."/>
            <person name="Loeffler F."/>
            <person name="Richardson P."/>
        </authorList>
    </citation>
    <scope>NUCLEOTIDE SEQUENCE [LARGE SCALE GENOMIC DNA]</scope>
    <source>
        <strain>ATCC BAA-2100 / JCM 16839 / KCTC 5957 / BAV1</strain>
    </source>
</reference>
<sequence>MTRGLVFFVSTACGILADQLSKFIITANLATGTSIPESGFFQIVHVHNTGAAFSIFQGHIEWLIAASVLGVILAMTAFFIRKKLPFLDTRPGLIALGVILAGTVGNLIDRVRLGYVTDFIRVGDFPTFNIADSCLTVGVIGLLLLYIVSSHVSGDTSENV</sequence>
<feature type="chain" id="PRO_1000076922" description="Lipoprotein signal peptidase">
    <location>
        <begin position="1"/>
        <end position="160"/>
    </location>
</feature>
<feature type="transmembrane region" description="Helical" evidence="1">
    <location>
        <begin position="5"/>
        <end position="25"/>
    </location>
</feature>
<feature type="transmembrane region" description="Helical" evidence="1">
    <location>
        <begin position="60"/>
        <end position="80"/>
    </location>
</feature>
<feature type="transmembrane region" description="Helical" evidence="1">
    <location>
        <begin position="84"/>
        <end position="104"/>
    </location>
</feature>
<feature type="transmembrane region" description="Helical" evidence="1">
    <location>
        <begin position="128"/>
        <end position="148"/>
    </location>
</feature>
<feature type="active site" evidence="1">
    <location>
        <position position="118"/>
    </location>
</feature>
<feature type="active site" evidence="1">
    <location>
        <position position="132"/>
    </location>
</feature>
<organism>
    <name type="scientific">Dehalococcoides mccartyi (strain ATCC BAA-2100 / JCM 16839 / KCTC 5957 / BAV1)</name>
    <dbReference type="NCBI Taxonomy" id="216389"/>
    <lineage>
        <taxon>Bacteria</taxon>
        <taxon>Bacillati</taxon>
        <taxon>Chloroflexota</taxon>
        <taxon>Dehalococcoidia</taxon>
        <taxon>Dehalococcoidales</taxon>
        <taxon>Dehalococcoidaceae</taxon>
        <taxon>Dehalococcoides</taxon>
    </lineage>
</organism>
<dbReference type="EC" id="3.4.23.36" evidence="1"/>
<dbReference type="EMBL" id="CP000688">
    <property type="protein sequence ID" value="ABQ17764.1"/>
    <property type="molecule type" value="Genomic_DNA"/>
</dbReference>
<dbReference type="SMR" id="A5FPV7"/>
<dbReference type="KEGG" id="deb:DehaBAV1_1185"/>
<dbReference type="PATRIC" id="fig|216389.18.peg.1249"/>
<dbReference type="HOGENOM" id="CLU_083252_4_0_0"/>
<dbReference type="UniPathway" id="UPA00665"/>
<dbReference type="GO" id="GO:0005886">
    <property type="term" value="C:plasma membrane"/>
    <property type="evidence" value="ECO:0007669"/>
    <property type="project" value="UniProtKB-SubCell"/>
</dbReference>
<dbReference type="GO" id="GO:0004190">
    <property type="term" value="F:aspartic-type endopeptidase activity"/>
    <property type="evidence" value="ECO:0007669"/>
    <property type="project" value="UniProtKB-UniRule"/>
</dbReference>
<dbReference type="GO" id="GO:0006508">
    <property type="term" value="P:proteolysis"/>
    <property type="evidence" value="ECO:0007669"/>
    <property type="project" value="UniProtKB-KW"/>
</dbReference>
<dbReference type="HAMAP" id="MF_00161">
    <property type="entry name" value="LspA"/>
    <property type="match status" value="1"/>
</dbReference>
<dbReference type="InterPro" id="IPR001872">
    <property type="entry name" value="Peptidase_A8"/>
</dbReference>
<dbReference type="NCBIfam" id="TIGR00077">
    <property type="entry name" value="lspA"/>
    <property type="match status" value="1"/>
</dbReference>
<dbReference type="NCBIfam" id="NF011365">
    <property type="entry name" value="PRK14784.1"/>
    <property type="match status" value="1"/>
</dbReference>
<dbReference type="PANTHER" id="PTHR33695">
    <property type="entry name" value="LIPOPROTEIN SIGNAL PEPTIDASE"/>
    <property type="match status" value="1"/>
</dbReference>
<dbReference type="PANTHER" id="PTHR33695:SF1">
    <property type="entry name" value="LIPOPROTEIN SIGNAL PEPTIDASE"/>
    <property type="match status" value="1"/>
</dbReference>
<dbReference type="Pfam" id="PF01252">
    <property type="entry name" value="Peptidase_A8"/>
    <property type="match status" value="1"/>
</dbReference>
<dbReference type="PRINTS" id="PR00781">
    <property type="entry name" value="LIPOSIGPTASE"/>
</dbReference>
<dbReference type="PROSITE" id="PS00855">
    <property type="entry name" value="SPASE_II"/>
    <property type="match status" value="1"/>
</dbReference>
<gene>
    <name evidence="1" type="primary">lspA</name>
    <name type="ordered locus">DehaBAV1_1185</name>
</gene>
<keyword id="KW-0064">Aspartyl protease</keyword>
<keyword id="KW-1003">Cell membrane</keyword>
<keyword id="KW-0378">Hydrolase</keyword>
<keyword id="KW-0472">Membrane</keyword>
<keyword id="KW-0645">Protease</keyword>
<keyword id="KW-0812">Transmembrane</keyword>
<keyword id="KW-1133">Transmembrane helix</keyword>
<comment type="function">
    <text evidence="1">This protein specifically catalyzes the removal of signal peptides from prolipoproteins.</text>
</comment>
<comment type="catalytic activity">
    <reaction evidence="1">
        <text>Release of signal peptides from bacterial membrane prolipoproteins. Hydrolyzes -Xaa-Yaa-Zaa-|-(S,diacylglyceryl)Cys-, in which Xaa is hydrophobic (preferably Leu), and Yaa (Ala or Ser) and Zaa (Gly or Ala) have small, neutral side chains.</text>
        <dbReference type="EC" id="3.4.23.36"/>
    </reaction>
</comment>
<comment type="pathway">
    <text evidence="1">Protein modification; lipoprotein biosynthesis (signal peptide cleavage).</text>
</comment>
<comment type="subcellular location">
    <subcellularLocation>
        <location evidence="1">Cell membrane</location>
        <topology evidence="1">Multi-pass membrane protein</topology>
    </subcellularLocation>
</comment>
<comment type="similarity">
    <text evidence="1">Belongs to the peptidase A8 family.</text>
</comment>